<comment type="function">
    <text evidence="1 2">Transcriptional regulator that controls a genetic switch in male development. It is necessary and sufficient for initiating male sex determination by directing the development of supporting cell precursors (pre-Sertoli cells) as Sertoli rather than granulosa cells. Involved in different aspects of gene regulation including promoter activation or repression. Binds to the DNA consensus sequence 5'-[AT]AACAA[AT]-3'. SRY HMG box recognizes DNA by partial intercalation in the minor groove and promotes DNA bending. Also involved in pre-mRNA splicing (By similarity). In male adult brain involved in the maintenance of motor functions of dopaminergic neurons (By similarity).</text>
</comment>
<comment type="subunit">
    <text evidence="2">Interacts with CALM, EP300, HDAC3, KPNB1, ZNF208 isoform KRAB-O, PARP1, SLC9A3R2 and WT1. The interaction with EP300 modulates its DNA-binding activity. The interaction with KPNB1 is sensitive to dissociation by Ran in the GTP-bound form. Interaction with PARP1 impaired its DNA-binding activity.</text>
</comment>
<comment type="subcellular location">
    <subcellularLocation>
        <location evidence="2">Nucleus speckle</location>
    </subcellularLocation>
    <subcellularLocation>
        <location evidence="2">Cytoplasm</location>
    </subcellularLocation>
    <subcellularLocation>
        <location evidence="2">Nucleus</location>
    </subcellularLocation>
</comment>
<comment type="similarity">
    <text evidence="5">Belongs to the SRY family.</text>
</comment>
<comment type="online information" name="Protein Spotlight">
    <link uri="https://www.proteinspotlight.org/back_issues/080"/>
    <text>The tenuous nature of sex - Issue 80 of March 2007</text>
</comment>
<organism>
    <name type="scientific">Neophocaena phocaenoides</name>
    <name type="common">Finless porpoise</name>
    <name type="synonym">Delphinus phocaenoides</name>
    <dbReference type="NCBI Taxonomy" id="34892"/>
    <lineage>
        <taxon>Eukaryota</taxon>
        <taxon>Metazoa</taxon>
        <taxon>Chordata</taxon>
        <taxon>Craniata</taxon>
        <taxon>Vertebrata</taxon>
        <taxon>Euteleostomi</taxon>
        <taxon>Mammalia</taxon>
        <taxon>Eutheria</taxon>
        <taxon>Laurasiatheria</taxon>
        <taxon>Artiodactyla</taxon>
        <taxon>Whippomorpha</taxon>
        <taxon>Cetacea</taxon>
        <taxon>Odontoceti</taxon>
        <taxon>Phocoenidae</taxon>
        <taxon>Neophocaena</taxon>
    </lineage>
</organism>
<sequence>MFRIVNGEDYSPAVQQRNILDFGKAPSLLWTDNGSSNDRCDTGGNCRESGQDRVKRPMNAFIVWSRDQRRKVALENPQMQNSEISKRLGYDWKMLTEAEKQPFFEEAQRLRAMHRDKYPGYKYRPRRKAKEATEIASRRLFSTVQPNAHRGDLVPLHIQGHTFTNGKPVKPLTAHEHKQLTPATGASQQSDKPAPQ</sequence>
<name>SRY_NEOPH</name>
<keyword id="KW-0010">Activator</keyword>
<keyword id="KW-0112">Calmodulin-binding</keyword>
<keyword id="KW-0963">Cytoplasm</keyword>
<keyword id="KW-0221">Differentiation</keyword>
<keyword id="KW-0238">DNA-binding</keyword>
<keyword id="KW-0539">Nucleus</keyword>
<keyword id="KW-0726">Sexual differentiation</keyword>
<keyword id="KW-0804">Transcription</keyword>
<keyword id="KW-0805">Transcription regulation</keyword>
<proteinExistence type="inferred from homology"/>
<dbReference type="EMBL" id="AB108520">
    <property type="protein sequence ID" value="BAC75652.1"/>
    <property type="molecule type" value="Genomic_DNA"/>
</dbReference>
<dbReference type="EMBL" id="DQ417778">
    <property type="protein sequence ID" value="ABD77574.1"/>
    <property type="molecule type" value="Genomic_DNA"/>
</dbReference>
<dbReference type="SMR" id="Q864Q1"/>
<dbReference type="GO" id="GO:0005737">
    <property type="term" value="C:cytoplasm"/>
    <property type="evidence" value="ECO:0007669"/>
    <property type="project" value="UniProtKB-SubCell"/>
</dbReference>
<dbReference type="GO" id="GO:0016607">
    <property type="term" value="C:nuclear speck"/>
    <property type="evidence" value="ECO:0007669"/>
    <property type="project" value="UniProtKB-SubCell"/>
</dbReference>
<dbReference type="GO" id="GO:0005634">
    <property type="term" value="C:nucleus"/>
    <property type="evidence" value="ECO:0000250"/>
    <property type="project" value="UniProtKB"/>
</dbReference>
<dbReference type="GO" id="GO:0005516">
    <property type="term" value="F:calmodulin binding"/>
    <property type="evidence" value="ECO:0007669"/>
    <property type="project" value="UniProtKB-KW"/>
</dbReference>
<dbReference type="GO" id="GO:0001228">
    <property type="term" value="F:DNA-binding transcription activator activity, RNA polymerase II-specific"/>
    <property type="evidence" value="ECO:0007669"/>
    <property type="project" value="TreeGrafter"/>
</dbReference>
<dbReference type="GO" id="GO:0000978">
    <property type="term" value="F:RNA polymerase II cis-regulatory region sequence-specific DNA binding"/>
    <property type="evidence" value="ECO:0007669"/>
    <property type="project" value="TreeGrafter"/>
</dbReference>
<dbReference type="GO" id="GO:0030154">
    <property type="term" value="P:cell differentiation"/>
    <property type="evidence" value="ECO:0007669"/>
    <property type="project" value="UniProtKB-KW"/>
</dbReference>
<dbReference type="GO" id="GO:0030238">
    <property type="term" value="P:male sex determination"/>
    <property type="evidence" value="ECO:0007669"/>
    <property type="project" value="InterPro"/>
</dbReference>
<dbReference type="GO" id="GO:0007548">
    <property type="term" value="P:sex differentiation"/>
    <property type="evidence" value="ECO:0007669"/>
    <property type="project" value="UniProtKB-KW"/>
</dbReference>
<dbReference type="CDD" id="cd22034">
    <property type="entry name" value="HMG-box_SoxA_SRY"/>
    <property type="match status" value="1"/>
</dbReference>
<dbReference type="FunFam" id="1.10.30.10:FF:000002">
    <property type="entry name" value="transcription factor Sox-2"/>
    <property type="match status" value="1"/>
</dbReference>
<dbReference type="Gene3D" id="1.10.30.10">
    <property type="entry name" value="High mobility group box domain"/>
    <property type="match status" value="1"/>
</dbReference>
<dbReference type="InterPro" id="IPR009071">
    <property type="entry name" value="HMG_box_dom"/>
</dbReference>
<dbReference type="InterPro" id="IPR036910">
    <property type="entry name" value="HMG_box_dom_sf"/>
</dbReference>
<dbReference type="InterPro" id="IPR017253">
    <property type="entry name" value="SRY"/>
</dbReference>
<dbReference type="InterPro" id="IPR050140">
    <property type="entry name" value="SRY-related_HMG-box_TF-like"/>
</dbReference>
<dbReference type="PANTHER" id="PTHR10270:SF161">
    <property type="entry name" value="SEX-DETERMINING REGION Y PROTEIN"/>
    <property type="match status" value="1"/>
</dbReference>
<dbReference type="PANTHER" id="PTHR10270">
    <property type="entry name" value="SOX TRANSCRIPTION FACTOR"/>
    <property type="match status" value="1"/>
</dbReference>
<dbReference type="Pfam" id="PF00505">
    <property type="entry name" value="HMG_box"/>
    <property type="match status" value="1"/>
</dbReference>
<dbReference type="PIRSF" id="PIRSF037653">
    <property type="entry name" value="SRY"/>
    <property type="match status" value="1"/>
</dbReference>
<dbReference type="SMART" id="SM00398">
    <property type="entry name" value="HMG"/>
    <property type="match status" value="1"/>
</dbReference>
<dbReference type="SUPFAM" id="SSF47095">
    <property type="entry name" value="HMG-box"/>
    <property type="match status" value="1"/>
</dbReference>
<dbReference type="PROSITE" id="PS50118">
    <property type="entry name" value="HMG_BOX_2"/>
    <property type="match status" value="1"/>
</dbReference>
<gene>
    <name type="primary">SRY</name>
    <name type="synonym">TDF</name>
</gene>
<reference key="1">
    <citation type="journal article" date="2003" name="Mammal Study">
        <title>SRY gene structure and phylogeny in the cetacean species.</title>
        <authorList>
            <person name="Nishida S."/>
            <person name="Pastene L.A."/>
            <person name="Goto M."/>
            <person name="Koike H."/>
        </authorList>
    </citation>
    <scope>NUCLEOTIDE SEQUENCE [GENOMIC DNA]</scope>
</reference>
<reference key="2">
    <citation type="submission" date="2006-02" db="EMBL/GenBank/DDBJ databases">
        <title>Sequence analysis of sry and six dmrt genes in Neophocaena phocaenoides.</title>
        <authorList>
            <person name="Nie L.W."/>
            <person name="Cao C.H."/>
        </authorList>
    </citation>
    <scope>NUCLEOTIDE SEQUENCE [GENOMIC DNA]</scope>
</reference>
<feature type="chain" id="PRO_0000048691" description="Sex-determining region Y protein">
    <location>
        <begin position="1"/>
        <end position="196"/>
    </location>
</feature>
<feature type="DNA-binding region" description="HMG box" evidence="3">
    <location>
        <begin position="54"/>
        <end position="122"/>
    </location>
</feature>
<feature type="region of interest" description="Disordered" evidence="4">
    <location>
        <begin position="33"/>
        <end position="52"/>
    </location>
</feature>
<feature type="region of interest" description="Disordered" evidence="4">
    <location>
        <begin position="164"/>
        <end position="196"/>
    </location>
</feature>
<feature type="compositionally biased region" description="Polar residues" evidence="4">
    <location>
        <begin position="181"/>
        <end position="196"/>
    </location>
</feature>
<evidence type="ECO:0000250" key="1">
    <source>
        <dbReference type="UniProtKB" id="P36394"/>
    </source>
</evidence>
<evidence type="ECO:0000250" key="2">
    <source>
        <dbReference type="UniProtKB" id="Q05066"/>
    </source>
</evidence>
<evidence type="ECO:0000255" key="3">
    <source>
        <dbReference type="PROSITE-ProRule" id="PRU00267"/>
    </source>
</evidence>
<evidence type="ECO:0000256" key="4">
    <source>
        <dbReference type="SAM" id="MobiDB-lite"/>
    </source>
</evidence>
<evidence type="ECO:0000305" key="5"/>
<protein>
    <recommendedName>
        <fullName>Sex-determining region Y protein</fullName>
    </recommendedName>
    <alternativeName>
        <fullName>Testis-determining factor</fullName>
    </alternativeName>
</protein>
<accession>Q864Q1</accession>
<accession>Q1ZZF2</accession>